<evidence type="ECO:0000255" key="1">
    <source>
        <dbReference type="HAMAP-Rule" id="MF_00037"/>
    </source>
</evidence>
<organism>
    <name type="scientific">Aliivibrio fischeri (strain ATCC 700601 / ES114)</name>
    <name type="common">Vibrio fischeri</name>
    <dbReference type="NCBI Taxonomy" id="312309"/>
    <lineage>
        <taxon>Bacteria</taxon>
        <taxon>Pseudomonadati</taxon>
        <taxon>Pseudomonadota</taxon>
        <taxon>Gammaproteobacteria</taxon>
        <taxon>Vibrionales</taxon>
        <taxon>Vibrionaceae</taxon>
        <taxon>Aliivibrio</taxon>
    </lineage>
</organism>
<proteinExistence type="inferred from homology"/>
<sequence length="349" mass="39166">MQILLNKTLKPYNSFSVNESADLIIQADSIQDLIDIWSDKKYTDMTKLPLGRGSNTLFCNHFNGVVVLNRLFGKSVTETDTDYLLKISSGEDWPALVEWCVDNGFAGIENLAMIPGCAGSAPIQNIGAYGLELKDICESVEYLDLETLQIKTLKNSECLFGYRESIFKHELKDRCIITAITLRLNKQWQPVLAYGPLSDLRNSKTTPKNVFDKICEIRSKKLPDPNVIGNAGSFFKNPVISEEHYLALCETYPNLPAYDVTEGKKIAAGWLIDNAGLKGFKINGAQVHQEQALVLINTGTATSEDILELANHVKNSVLDMYDIELEHEVRFYLNGEESFLSELFDERTH</sequence>
<accession>Q5E225</accession>
<comment type="function">
    <text evidence="1">Cell wall formation.</text>
</comment>
<comment type="catalytic activity">
    <reaction evidence="1">
        <text>UDP-N-acetyl-alpha-D-muramate + NADP(+) = UDP-N-acetyl-3-O-(1-carboxyvinyl)-alpha-D-glucosamine + NADPH + H(+)</text>
        <dbReference type="Rhea" id="RHEA:12248"/>
        <dbReference type="ChEBI" id="CHEBI:15378"/>
        <dbReference type="ChEBI" id="CHEBI:57783"/>
        <dbReference type="ChEBI" id="CHEBI:58349"/>
        <dbReference type="ChEBI" id="CHEBI:68483"/>
        <dbReference type="ChEBI" id="CHEBI:70757"/>
        <dbReference type="EC" id="1.3.1.98"/>
    </reaction>
</comment>
<comment type="cofactor">
    <cofactor evidence="1">
        <name>FAD</name>
        <dbReference type="ChEBI" id="CHEBI:57692"/>
    </cofactor>
</comment>
<comment type="pathway">
    <text evidence="1">Cell wall biogenesis; peptidoglycan biosynthesis.</text>
</comment>
<comment type="subcellular location">
    <subcellularLocation>
        <location evidence="1">Cytoplasm</location>
    </subcellularLocation>
</comment>
<comment type="similarity">
    <text evidence="1">Belongs to the MurB family.</text>
</comment>
<keyword id="KW-0131">Cell cycle</keyword>
<keyword id="KW-0132">Cell division</keyword>
<keyword id="KW-0133">Cell shape</keyword>
<keyword id="KW-0961">Cell wall biogenesis/degradation</keyword>
<keyword id="KW-0963">Cytoplasm</keyword>
<keyword id="KW-0274">FAD</keyword>
<keyword id="KW-0285">Flavoprotein</keyword>
<keyword id="KW-0521">NADP</keyword>
<keyword id="KW-0560">Oxidoreductase</keyword>
<keyword id="KW-0573">Peptidoglycan synthesis</keyword>
<keyword id="KW-1185">Reference proteome</keyword>
<dbReference type="EC" id="1.3.1.98" evidence="1"/>
<dbReference type="EMBL" id="CP000020">
    <property type="protein sequence ID" value="AAW86921.1"/>
    <property type="molecule type" value="Genomic_DNA"/>
</dbReference>
<dbReference type="RefSeq" id="WP_011262798.1">
    <property type="nucleotide sequence ID" value="NC_006840.2"/>
</dbReference>
<dbReference type="RefSeq" id="YP_205809.1">
    <property type="nucleotide sequence ID" value="NC_006840.2"/>
</dbReference>
<dbReference type="SMR" id="Q5E225"/>
<dbReference type="STRING" id="312309.VF_2426"/>
<dbReference type="EnsemblBacteria" id="AAW86921">
    <property type="protein sequence ID" value="AAW86921"/>
    <property type="gene ID" value="VF_2426"/>
</dbReference>
<dbReference type="GeneID" id="54165143"/>
<dbReference type="KEGG" id="vfi:VF_2426"/>
<dbReference type="PATRIC" id="fig|312309.11.peg.2457"/>
<dbReference type="eggNOG" id="COG0812">
    <property type="taxonomic scope" value="Bacteria"/>
</dbReference>
<dbReference type="HOGENOM" id="CLU_035304_0_0_6"/>
<dbReference type="OrthoDB" id="9804753at2"/>
<dbReference type="UniPathway" id="UPA00219"/>
<dbReference type="Proteomes" id="UP000000537">
    <property type="component" value="Chromosome I"/>
</dbReference>
<dbReference type="GO" id="GO:0005829">
    <property type="term" value="C:cytosol"/>
    <property type="evidence" value="ECO:0007669"/>
    <property type="project" value="TreeGrafter"/>
</dbReference>
<dbReference type="GO" id="GO:0071949">
    <property type="term" value="F:FAD binding"/>
    <property type="evidence" value="ECO:0007669"/>
    <property type="project" value="InterPro"/>
</dbReference>
<dbReference type="GO" id="GO:0008762">
    <property type="term" value="F:UDP-N-acetylmuramate dehydrogenase activity"/>
    <property type="evidence" value="ECO:0007669"/>
    <property type="project" value="UniProtKB-UniRule"/>
</dbReference>
<dbReference type="GO" id="GO:0051301">
    <property type="term" value="P:cell division"/>
    <property type="evidence" value="ECO:0007669"/>
    <property type="project" value="UniProtKB-KW"/>
</dbReference>
<dbReference type="GO" id="GO:0071555">
    <property type="term" value="P:cell wall organization"/>
    <property type="evidence" value="ECO:0007669"/>
    <property type="project" value="UniProtKB-KW"/>
</dbReference>
<dbReference type="GO" id="GO:0009252">
    <property type="term" value="P:peptidoglycan biosynthetic process"/>
    <property type="evidence" value="ECO:0007669"/>
    <property type="project" value="UniProtKB-UniRule"/>
</dbReference>
<dbReference type="GO" id="GO:0008360">
    <property type="term" value="P:regulation of cell shape"/>
    <property type="evidence" value="ECO:0007669"/>
    <property type="project" value="UniProtKB-KW"/>
</dbReference>
<dbReference type="Gene3D" id="3.30.465.10">
    <property type="match status" value="1"/>
</dbReference>
<dbReference type="Gene3D" id="3.90.78.10">
    <property type="entry name" value="UDP-N-acetylenolpyruvoylglucosamine reductase, C-terminal domain"/>
    <property type="match status" value="1"/>
</dbReference>
<dbReference type="Gene3D" id="3.30.43.10">
    <property type="entry name" value="Uridine Diphospho-n-acetylenolpyruvylglucosamine Reductase, domain 2"/>
    <property type="match status" value="1"/>
</dbReference>
<dbReference type="HAMAP" id="MF_00037">
    <property type="entry name" value="MurB"/>
    <property type="match status" value="1"/>
</dbReference>
<dbReference type="InterPro" id="IPR016166">
    <property type="entry name" value="FAD-bd_PCMH"/>
</dbReference>
<dbReference type="InterPro" id="IPR036318">
    <property type="entry name" value="FAD-bd_PCMH-like_sf"/>
</dbReference>
<dbReference type="InterPro" id="IPR016167">
    <property type="entry name" value="FAD-bd_PCMH_sub1"/>
</dbReference>
<dbReference type="InterPro" id="IPR016169">
    <property type="entry name" value="FAD-bd_PCMH_sub2"/>
</dbReference>
<dbReference type="InterPro" id="IPR003170">
    <property type="entry name" value="MurB"/>
</dbReference>
<dbReference type="InterPro" id="IPR011601">
    <property type="entry name" value="MurB_C"/>
</dbReference>
<dbReference type="InterPro" id="IPR036635">
    <property type="entry name" value="MurB_C_sf"/>
</dbReference>
<dbReference type="InterPro" id="IPR006094">
    <property type="entry name" value="Oxid_FAD_bind_N"/>
</dbReference>
<dbReference type="NCBIfam" id="TIGR00179">
    <property type="entry name" value="murB"/>
    <property type="match status" value="1"/>
</dbReference>
<dbReference type="NCBIfam" id="NF000755">
    <property type="entry name" value="PRK00046.1"/>
    <property type="match status" value="1"/>
</dbReference>
<dbReference type="PANTHER" id="PTHR21071">
    <property type="entry name" value="UDP-N-ACETYLENOLPYRUVOYLGLUCOSAMINE REDUCTASE"/>
    <property type="match status" value="1"/>
</dbReference>
<dbReference type="PANTHER" id="PTHR21071:SF4">
    <property type="entry name" value="UDP-N-ACETYLENOLPYRUVOYLGLUCOSAMINE REDUCTASE"/>
    <property type="match status" value="1"/>
</dbReference>
<dbReference type="Pfam" id="PF01565">
    <property type="entry name" value="FAD_binding_4"/>
    <property type="match status" value="1"/>
</dbReference>
<dbReference type="Pfam" id="PF02873">
    <property type="entry name" value="MurB_C"/>
    <property type="match status" value="1"/>
</dbReference>
<dbReference type="SUPFAM" id="SSF56176">
    <property type="entry name" value="FAD-binding/transporter-associated domain-like"/>
    <property type="match status" value="1"/>
</dbReference>
<dbReference type="SUPFAM" id="SSF56194">
    <property type="entry name" value="Uridine diphospho-N-Acetylenolpyruvylglucosamine reductase, MurB, C-terminal domain"/>
    <property type="match status" value="1"/>
</dbReference>
<dbReference type="PROSITE" id="PS51387">
    <property type="entry name" value="FAD_PCMH"/>
    <property type="match status" value="1"/>
</dbReference>
<gene>
    <name evidence="1" type="primary">murB</name>
    <name type="ordered locus">VF_2426</name>
</gene>
<name>MURB_ALIF1</name>
<reference key="1">
    <citation type="journal article" date="2005" name="Proc. Natl. Acad. Sci. U.S.A.">
        <title>Complete genome sequence of Vibrio fischeri: a symbiotic bacterium with pathogenic congeners.</title>
        <authorList>
            <person name="Ruby E.G."/>
            <person name="Urbanowski M."/>
            <person name="Campbell J."/>
            <person name="Dunn A."/>
            <person name="Faini M."/>
            <person name="Gunsalus R."/>
            <person name="Lostroh P."/>
            <person name="Lupp C."/>
            <person name="McCann J."/>
            <person name="Millikan D."/>
            <person name="Schaefer A."/>
            <person name="Stabb E."/>
            <person name="Stevens A."/>
            <person name="Visick K."/>
            <person name="Whistler C."/>
            <person name="Greenberg E.P."/>
        </authorList>
    </citation>
    <scope>NUCLEOTIDE SEQUENCE [LARGE SCALE GENOMIC DNA]</scope>
    <source>
        <strain>ATCC 700601 / ES114</strain>
    </source>
</reference>
<feature type="chain" id="PRO_0000179286" description="UDP-N-acetylenolpyruvoylglucosamine reductase">
    <location>
        <begin position="1"/>
        <end position="349"/>
    </location>
</feature>
<feature type="domain" description="FAD-binding PCMH-type" evidence="1">
    <location>
        <begin position="17"/>
        <end position="187"/>
    </location>
</feature>
<feature type="active site" evidence="1">
    <location>
        <position position="163"/>
    </location>
</feature>
<feature type="active site" description="Proton donor" evidence="1">
    <location>
        <position position="233"/>
    </location>
</feature>
<feature type="active site" evidence="1">
    <location>
        <position position="328"/>
    </location>
</feature>
<protein>
    <recommendedName>
        <fullName evidence="1">UDP-N-acetylenolpyruvoylglucosamine reductase</fullName>
        <ecNumber evidence="1">1.3.1.98</ecNumber>
    </recommendedName>
    <alternativeName>
        <fullName evidence="1">UDP-N-acetylmuramate dehydrogenase</fullName>
    </alternativeName>
</protein>